<organism>
    <name type="scientific">Rickettsia conorii (strain ATCC VR-613 / Malish 7)</name>
    <dbReference type="NCBI Taxonomy" id="272944"/>
    <lineage>
        <taxon>Bacteria</taxon>
        <taxon>Pseudomonadati</taxon>
        <taxon>Pseudomonadota</taxon>
        <taxon>Alphaproteobacteria</taxon>
        <taxon>Rickettsiales</taxon>
        <taxon>Rickettsiaceae</taxon>
        <taxon>Rickettsieae</taxon>
        <taxon>Rickettsia</taxon>
        <taxon>spotted fever group</taxon>
    </lineage>
</organism>
<dbReference type="EC" id="2.7.7.6" evidence="1"/>
<dbReference type="EMBL" id="AE006914">
    <property type="protein sequence ID" value="AAL03420.1"/>
    <property type="molecule type" value="Genomic_DNA"/>
</dbReference>
<dbReference type="PIR" id="B97810">
    <property type="entry name" value="B97810"/>
</dbReference>
<dbReference type="RefSeq" id="WP_010977486.1">
    <property type="nucleotide sequence ID" value="NC_003103.1"/>
</dbReference>
<dbReference type="SMR" id="Q92H89"/>
<dbReference type="GeneID" id="927855"/>
<dbReference type="KEGG" id="rco:RC0882"/>
<dbReference type="HOGENOM" id="CLU_138545_0_0_5"/>
<dbReference type="Proteomes" id="UP000000816">
    <property type="component" value="Chromosome"/>
</dbReference>
<dbReference type="GO" id="GO:0000428">
    <property type="term" value="C:DNA-directed RNA polymerase complex"/>
    <property type="evidence" value="ECO:0007669"/>
    <property type="project" value="UniProtKB-KW"/>
</dbReference>
<dbReference type="GO" id="GO:0003677">
    <property type="term" value="F:DNA binding"/>
    <property type="evidence" value="ECO:0007669"/>
    <property type="project" value="UniProtKB-UniRule"/>
</dbReference>
<dbReference type="GO" id="GO:0003899">
    <property type="term" value="F:DNA-directed RNA polymerase activity"/>
    <property type="evidence" value="ECO:0007669"/>
    <property type="project" value="UniProtKB-UniRule"/>
</dbReference>
<dbReference type="GO" id="GO:0006351">
    <property type="term" value="P:DNA-templated transcription"/>
    <property type="evidence" value="ECO:0007669"/>
    <property type="project" value="UniProtKB-UniRule"/>
</dbReference>
<dbReference type="Gene3D" id="3.90.940.10">
    <property type="match status" value="1"/>
</dbReference>
<dbReference type="HAMAP" id="MF_00366">
    <property type="entry name" value="RNApol_bact_RpoZ"/>
    <property type="match status" value="1"/>
</dbReference>
<dbReference type="InterPro" id="IPR003716">
    <property type="entry name" value="DNA-dir_RNA_pol_omega"/>
</dbReference>
<dbReference type="InterPro" id="IPR006110">
    <property type="entry name" value="Pol_omega/Rpo6/RPB6"/>
</dbReference>
<dbReference type="InterPro" id="IPR036161">
    <property type="entry name" value="RPB6/omega-like_sf"/>
</dbReference>
<dbReference type="NCBIfam" id="TIGR00690">
    <property type="entry name" value="rpoZ"/>
    <property type="match status" value="1"/>
</dbReference>
<dbReference type="PANTHER" id="PTHR34476">
    <property type="entry name" value="DNA-DIRECTED RNA POLYMERASE SUBUNIT OMEGA"/>
    <property type="match status" value="1"/>
</dbReference>
<dbReference type="PANTHER" id="PTHR34476:SF1">
    <property type="entry name" value="DNA-DIRECTED RNA POLYMERASE SUBUNIT OMEGA"/>
    <property type="match status" value="1"/>
</dbReference>
<dbReference type="Pfam" id="PF01192">
    <property type="entry name" value="RNA_pol_Rpb6"/>
    <property type="match status" value="1"/>
</dbReference>
<dbReference type="SMART" id="SM01409">
    <property type="entry name" value="RNA_pol_Rpb6"/>
    <property type="match status" value="1"/>
</dbReference>
<dbReference type="SUPFAM" id="SSF63562">
    <property type="entry name" value="RPB6/omega subunit-like"/>
    <property type="match status" value="1"/>
</dbReference>
<keyword id="KW-0240">DNA-directed RNA polymerase</keyword>
<keyword id="KW-0548">Nucleotidyltransferase</keyword>
<keyword id="KW-0804">Transcription</keyword>
<keyword id="KW-0808">Transferase</keyword>
<comment type="function">
    <text evidence="1">Promotes RNA polymerase assembly. Latches the N- and C-terminal regions of the beta' subunit thereby facilitating its interaction with the beta and alpha subunits.</text>
</comment>
<comment type="catalytic activity">
    <reaction evidence="1">
        <text>RNA(n) + a ribonucleoside 5'-triphosphate = RNA(n+1) + diphosphate</text>
        <dbReference type="Rhea" id="RHEA:21248"/>
        <dbReference type="Rhea" id="RHEA-COMP:14527"/>
        <dbReference type="Rhea" id="RHEA-COMP:17342"/>
        <dbReference type="ChEBI" id="CHEBI:33019"/>
        <dbReference type="ChEBI" id="CHEBI:61557"/>
        <dbReference type="ChEBI" id="CHEBI:140395"/>
        <dbReference type="EC" id="2.7.7.6"/>
    </reaction>
</comment>
<comment type="subunit">
    <text evidence="1">The RNAP catalytic core consists of 2 alpha, 1 beta, 1 beta' and 1 omega subunit. When a sigma factor is associated with the core the holoenzyme is formed, which can initiate transcription.</text>
</comment>
<comment type="similarity">
    <text evidence="1">Belongs to the RNA polymerase subunit omega family.</text>
</comment>
<name>RPOZ_RICCN</name>
<feature type="chain" id="PRO_0000128970" description="DNA-directed RNA polymerase subunit omega">
    <location>
        <begin position="1"/>
        <end position="127"/>
    </location>
</feature>
<reference key="1">
    <citation type="journal article" date="2001" name="Science">
        <title>Mechanisms of evolution in Rickettsia conorii and R. prowazekii.</title>
        <authorList>
            <person name="Ogata H."/>
            <person name="Audic S."/>
            <person name="Renesto-Audiffren P."/>
            <person name="Fournier P.-E."/>
            <person name="Barbe V."/>
            <person name="Samson D."/>
            <person name="Roux V."/>
            <person name="Cossart P."/>
            <person name="Weissenbach J."/>
            <person name="Claverie J.-M."/>
            <person name="Raoult D."/>
        </authorList>
    </citation>
    <scope>NUCLEOTIDE SEQUENCE [LARGE SCALE GENOMIC DNA]</scope>
    <source>
        <strain>ATCC VR-613 / Malish 7</strain>
    </source>
</reference>
<accession>Q92H89</accession>
<sequence>MARITAEDCNKIIPDRFRLVVLATRYAKLLNYKVETNQIKKEKRDKPPVIALRRIAAGKVSVAQLEQDLINSLRTRTMIEPLVNQDESEAVEEKFEYLPEVYIGEDYSDLDDQIFIDENGEDYETDK</sequence>
<evidence type="ECO:0000255" key="1">
    <source>
        <dbReference type="HAMAP-Rule" id="MF_00366"/>
    </source>
</evidence>
<protein>
    <recommendedName>
        <fullName evidence="1">DNA-directed RNA polymerase subunit omega</fullName>
        <shortName evidence="1">RNAP omega subunit</shortName>
        <ecNumber evidence="1">2.7.7.6</ecNumber>
    </recommendedName>
    <alternativeName>
        <fullName evidence="1">RNA polymerase omega subunit</fullName>
    </alternativeName>
    <alternativeName>
        <fullName evidence="1">Transcriptase subunit omega</fullName>
    </alternativeName>
</protein>
<proteinExistence type="inferred from homology"/>
<gene>
    <name evidence="1" type="primary">rpoZ</name>
    <name type="ordered locus">RC0882</name>
</gene>